<organism>
    <name type="scientific">Shouchella clausii (strain KSM-K16)</name>
    <name type="common">Alkalihalobacillus clausii</name>
    <dbReference type="NCBI Taxonomy" id="66692"/>
    <lineage>
        <taxon>Bacteria</taxon>
        <taxon>Bacillati</taxon>
        <taxon>Bacillota</taxon>
        <taxon>Bacilli</taxon>
        <taxon>Bacillales</taxon>
        <taxon>Bacillaceae</taxon>
        <taxon>Shouchella</taxon>
    </lineage>
</organism>
<sequence length="229" mass="25415">MIKNRDSFLDHVANQLGRPRQTEGVLRPNYRVSPQFEVLKDASKDELVTVLKEQCVAIHTDFKQVESGQLETALDETIDMYGAKSVIAWDDRRFHEFGLGSFLTRPSVSLWDNRDSKRSIEQAEIADVGITFSDITLAESGTVTLFSSNGKGRSVSLLPRYYIAIIPKSTLVARMTQAARHIRQLTGEGRLPSCINFISGPSNSADIEMSLVVGVHGPLKACYIVVDDK</sequence>
<dbReference type="EMBL" id="AP006627">
    <property type="protein sequence ID" value="BAD63516.1"/>
    <property type="molecule type" value="Genomic_DNA"/>
</dbReference>
<dbReference type="RefSeq" id="WP_011245832.1">
    <property type="nucleotide sequence ID" value="NC_006582.1"/>
</dbReference>
<dbReference type="SMR" id="Q5WJD9"/>
<dbReference type="STRING" id="66692.ABC0977"/>
<dbReference type="KEGG" id="bcl:ABC0977"/>
<dbReference type="eggNOG" id="COG1556">
    <property type="taxonomic scope" value="Bacteria"/>
</dbReference>
<dbReference type="HOGENOM" id="CLU_090664_1_0_9"/>
<dbReference type="OrthoDB" id="9794157at2"/>
<dbReference type="Proteomes" id="UP000001168">
    <property type="component" value="Chromosome"/>
</dbReference>
<dbReference type="GO" id="GO:0006089">
    <property type="term" value="P:lactate metabolic process"/>
    <property type="evidence" value="ECO:0007669"/>
    <property type="project" value="UniProtKB-UniRule"/>
</dbReference>
<dbReference type="Gene3D" id="3.40.50.10420">
    <property type="entry name" value="NagB/RpiA/CoA transferase-like"/>
    <property type="match status" value="1"/>
</dbReference>
<dbReference type="HAMAP" id="MF_02104">
    <property type="entry name" value="LutC"/>
    <property type="match status" value="1"/>
</dbReference>
<dbReference type="InterPro" id="IPR024185">
    <property type="entry name" value="FTHF_cligase-like_sf"/>
</dbReference>
<dbReference type="InterPro" id="IPR003741">
    <property type="entry name" value="LUD_dom"/>
</dbReference>
<dbReference type="InterPro" id="IPR022823">
    <property type="entry name" value="LutC"/>
</dbReference>
<dbReference type="InterPro" id="IPR037171">
    <property type="entry name" value="NagB/RpiA_transferase-like"/>
</dbReference>
<dbReference type="PANTHER" id="PTHR43682">
    <property type="entry name" value="LACTATE UTILIZATION PROTEIN C"/>
    <property type="match status" value="1"/>
</dbReference>
<dbReference type="PANTHER" id="PTHR43682:SF1">
    <property type="entry name" value="LACTATE UTILIZATION PROTEIN C"/>
    <property type="match status" value="1"/>
</dbReference>
<dbReference type="Pfam" id="PF02589">
    <property type="entry name" value="LUD_dom"/>
    <property type="match status" value="1"/>
</dbReference>
<dbReference type="SUPFAM" id="SSF100950">
    <property type="entry name" value="NagB/RpiA/CoA transferase-like"/>
    <property type="match status" value="1"/>
</dbReference>
<proteinExistence type="inferred from homology"/>
<reference key="1">
    <citation type="submission" date="2003-10" db="EMBL/GenBank/DDBJ databases">
        <title>The complete genome sequence of the alkaliphilic Bacillus clausii KSM-K16.</title>
        <authorList>
            <person name="Takaki Y."/>
            <person name="Kageyama Y."/>
            <person name="Shimamura S."/>
            <person name="Suzuki H."/>
            <person name="Nishi S."/>
            <person name="Hatada Y."/>
            <person name="Kawai S."/>
            <person name="Ito S."/>
            <person name="Horikoshi K."/>
        </authorList>
    </citation>
    <scope>NUCLEOTIDE SEQUENCE [LARGE SCALE GENOMIC DNA]</scope>
    <source>
        <strain>KSM-K16</strain>
    </source>
</reference>
<name>LUTC_SHOC1</name>
<feature type="chain" id="PRO_0000384007" description="Lactate utilization protein C">
    <location>
        <begin position="1"/>
        <end position="229"/>
    </location>
</feature>
<accession>Q5WJD9</accession>
<protein>
    <recommendedName>
        <fullName evidence="1">Lactate utilization protein C</fullName>
    </recommendedName>
</protein>
<gene>
    <name evidence="1" type="primary">lutC</name>
    <name type="ordered locus">ABC0977</name>
</gene>
<evidence type="ECO:0000255" key="1">
    <source>
        <dbReference type="HAMAP-Rule" id="MF_02104"/>
    </source>
</evidence>
<keyword id="KW-1185">Reference proteome</keyword>
<comment type="function">
    <text evidence="1">Is involved in L-lactate degradation and allows cells to grow with lactate as the sole carbon source.</text>
</comment>
<comment type="similarity">
    <text evidence="1">Belongs to the LutC/YkgG family.</text>
</comment>